<proteinExistence type="evidence at transcript level"/>
<gene>
    <name type="primary">UREG</name>
</gene>
<evidence type="ECO:0000250" key="1"/>
<evidence type="ECO:0000256" key="2">
    <source>
        <dbReference type="SAM" id="MobiDB-lite"/>
    </source>
</evidence>
<evidence type="ECO:0000269" key="3">
    <source>
    </source>
</evidence>
<evidence type="ECO:0000305" key="4"/>
<sequence length="284" mass="30864">MASHDHDHHHHHHHSHDDGDHHHSHHQDGSHGGGGGSWVGEDGRVWHSHDGLAPHSHEPIYSPGDFSKRAPPLISRRFAERAFTVGIGGPVGTGKTALMLALCRSLREKYSLAAVTNDIFTKEDGEFLIKHGALPEERIRAVETGGCPHAAIREDISINLGPLEELSNLYKADLLLCESGGDNLAANFSRELADYIIYIIDVSGGDKIPRKGGPGITQADLLIINKTDLAPAVGADLAVMERDALRMREGGPFVFAQVKHGVGVEEIVNHILQAWEIATGNKRR</sequence>
<feature type="chain" id="PRO_0000424256" description="Urease accessory protein G">
    <location>
        <begin position="1"/>
        <end position="284"/>
    </location>
</feature>
<feature type="region of interest" description="Disordered" evidence="2">
    <location>
        <begin position="1"/>
        <end position="51"/>
    </location>
</feature>
<feature type="compositionally biased region" description="Basic and acidic residues" evidence="2">
    <location>
        <begin position="15"/>
        <end position="29"/>
    </location>
</feature>
<feature type="compositionally biased region" description="Basic and acidic residues" evidence="2">
    <location>
        <begin position="41"/>
        <end position="51"/>
    </location>
</feature>
<feature type="binding site" evidence="1">
    <location>
        <begin position="89"/>
        <end position="96"/>
    </location>
    <ligand>
        <name>GTP</name>
        <dbReference type="ChEBI" id="CHEBI:37565"/>
    </ligand>
</feature>
<organism>
    <name type="scientific">Oryza sativa subsp. indica</name>
    <name type="common">Rice</name>
    <dbReference type="NCBI Taxonomy" id="39946"/>
    <lineage>
        <taxon>Eukaryota</taxon>
        <taxon>Viridiplantae</taxon>
        <taxon>Streptophyta</taxon>
        <taxon>Embryophyta</taxon>
        <taxon>Tracheophyta</taxon>
        <taxon>Spermatophyta</taxon>
        <taxon>Magnoliopsida</taxon>
        <taxon>Liliopsida</taxon>
        <taxon>Poales</taxon>
        <taxon>Poaceae</taxon>
        <taxon>BOP clade</taxon>
        <taxon>Oryzoideae</taxon>
        <taxon>Oryzeae</taxon>
        <taxon>Oryzinae</taxon>
        <taxon>Oryza</taxon>
        <taxon>Oryza sativa</taxon>
    </lineage>
</organism>
<name>UREG_ORYSI</name>
<reference key="1">
    <citation type="journal article" date="2010" name="Plant Physiol.">
        <title>Identification and characterization of proteins involved in rice urea and arginine catabolism.</title>
        <authorList>
            <person name="Cao F.Q."/>
            <person name="Werner A.K."/>
            <person name="Dahncke K."/>
            <person name="Romeis T."/>
            <person name="Liu L.H."/>
            <person name="Witte C.P."/>
        </authorList>
    </citation>
    <scope>NUCLEOTIDE SEQUENCE [MRNA]</scope>
    <scope>FUNCTION</scope>
    <source>
        <strain>cv. Hunan Late 2</strain>
    </source>
</reference>
<comment type="function">
    <text evidence="3">Required for the maturation and activation of urease via the functional incorporation of the urease nickel metallocenter.</text>
</comment>
<comment type="subunit">
    <text evidence="1">URED, UREF and UREG may form a complex that acts as a GTP-hydrolysis-dependent molecular chaperone, activating the urease apoprotein.</text>
</comment>
<comment type="similarity">
    <text evidence="4">Belongs to the SIMIBI class G3E GTPase family. UreG subfamily.</text>
</comment>
<protein>
    <recommendedName>
        <fullName>Urease accessory protein G</fullName>
        <shortName>AtUREG</shortName>
    </recommendedName>
</protein>
<keyword id="KW-0143">Chaperone</keyword>
<keyword id="KW-0342">GTP-binding</keyword>
<keyword id="KW-0996">Nickel insertion</keyword>
<keyword id="KW-0547">Nucleotide-binding</keyword>
<accession>E0ZS47</accession>
<dbReference type="EMBL" id="HM369059">
    <property type="protein sequence ID" value="ADK73998.1"/>
    <property type="molecule type" value="mRNA"/>
</dbReference>
<dbReference type="SMR" id="E0ZS47"/>
<dbReference type="EnsemblPlants" id="OsPr106_05g0026880.01">
    <property type="protein sequence ID" value="OsPr106_05g0026880.01"/>
    <property type="gene ID" value="OsPr106_05g0026880"/>
</dbReference>
<dbReference type="Gramene" id="OsPr106_05g0026880.01">
    <property type="protein sequence ID" value="OsPr106_05g0026880.01"/>
    <property type="gene ID" value="OsPr106_05g0026880"/>
</dbReference>
<dbReference type="GO" id="GO:0005525">
    <property type="term" value="F:GTP binding"/>
    <property type="evidence" value="ECO:0007669"/>
    <property type="project" value="UniProtKB-KW"/>
</dbReference>
<dbReference type="GO" id="GO:0003924">
    <property type="term" value="F:GTPase activity"/>
    <property type="evidence" value="ECO:0007669"/>
    <property type="project" value="InterPro"/>
</dbReference>
<dbReference type="GO" id="GO:0016151">
    <property type="term" value="F:nickel cation binding"/>
    <property type="evidence" value="ECO:0007669"/>
    <property type="project" value="InterPro"/>
</dbReference>
<dbReference type="GO" id="GO:0051604">
    <property type="term" value="P:protein maturation"/>
    <property type="evidence" value="ECO:0000314"/>
    <property type="project" value="UniProtKB"/>
</dbReference>
<dbReference type="GO" id="GO:0043419">
    <property type="term" value="P:urea catabolic process"/>
    <property type="evidence" value="ECO:0007669"/>
    <property type="project" value="InterPro"/>
</dbReference>
<dbReference type="CDD" id="cd05540">
    <property type="entry name" value="UreG"/>
    <property type="match status" value="1"/>
</dbReference>
<dbReference type="FunFam" id="3.40.50.300:FF:000208">
    <property type="entry name" value="Urease accessory protein UreG"/>
    <property type="match status" value="1"/>
</dbReference>
<dbReference type="Gene3D" id="3.40.50.300">
    <property type="entry name" value="P-loop containing nucleotide triphosphate hydrolases"/>
    <property type="match status" value="1"/>
</dbReference>
<dbReference type="HAMAP" id="MF_01389">
    <property type="entry name" value="UreG"/>
    <property type="match status" value="1"/>
</dbReference>
<dbReference type="InterPro" id="IPR003495">
    <property type="entry name" value="CobW/HypB/UreG_nucleotide-bd"/>
</dbReference>
<dbReference type="InterPro" id="IPR027417">
    <property type="entry name" value="P-loop_NTPase"/>
</dbReference>
<dbReference type="InterPro" id="IPR004400">
    <property type="entry name" value="UreG"/>
</dbReference>
<dbReference type="NCBIfam" id="TIGR00101">
    <property type="entry name" value="ureG"/>
    <property type="match status" value="1"/>
</dbReference>
<dbReference type="PANTHER" id="PTHR31715">
    <property type="entry name" value="UREASE ACCESSORY PROTEIN G"/>
    <property type="match status" value="1"/>
</dbReference>
<dbReference type="PANTHER" id="PTHR31715:SF0">
    <property type="entry name" value="UREASE ACCESSORY PROTEIN G"/>
    <property type="match status" value="1"/>
</dbReference>
<dbReference type="Pfam" id="PF02492">
    <property type="entry name" value="cobW"/>
    <property type="match status" value="1"/>
</dbReference>
<dbReference type="SUPFAM" id="SSF52540">
    <property type="entry name" value="P-loop containing nucleoside triphosphate hydrolases"/>
    <property type="match status" value="1"/>
</dbReference>